<comment type="function">
    <text evidence="2">Hydrolyzes N,N-dimethylformamide, and to a lesser extent N,N-dimethylacetamide and N,N-diethylacetamide. Has no activity against the substituted amides N-methylformamide, N-ethylformamide, N-ethylformamide and N-methylacetamide or the unsubstituted amides formamide, nicotinamide, acetoamide, benzamide, acetamide and acrylamide (By similarity).</text>
</comment>
<comment type="catalytic activity">
    <reaction evidence="2">
        <text>N,N-dimethylformamide + H2O = dimethylamine + formate</text>
        <dbReference type="Rhea" id="RHEA:19517"/>
        <dbReference type="ChEBI" id="CHEBI:15377"/>
        <dbReference type="ChEBI" id="CHEBI:15740"/>
        <dbReference type="ChEBI" id="CHEBI:17741"/>
        <dbReference type="ChEBI" id="CHEBI:58040"/>
        <dbReference type="EC" id="3.5.1.56"/>
    </reaction>
</comment>
<comment type="subunit">
    <text evidence="1">Heterotetramer of two DmfA1 (alpha) and two DmfA2 (beta) subunits.</text>
</comment>
<comment type="induction">
    <text evidence="3">By N,N-dimethylformamide.</text>
</comment>
<comment type="caution">
    <text evidence="4">It is not known which subunit of DmfA1 or DmfA2 possesses catalytic activity.</text>
</comment>
<keyword id="KW-0378">Hydrolase</keyword>
<keyword id="KW-0614">Plasmid</keyword>
<feature type="chain" id="PRO_0000404195" description="N,N-dimethylformamidase alpha subunit">
    <location>
        <begin position="1"/>
        <end position="141"/>
    </location>
</feature>
<dbReference type="EC" id="3.5.1.56"/>
<dbReference type="EMBL" id="GQ410978">
    <property type="protein sequence ID" value="ACV81785.1"/>
    <property type="molecule type" value="Genomic_DNA"/>
</dbReference>
<dbReference type="RefSeq" id="YP_003208119.1">
    <property type="nucleotide sequence ID" value="NC_010847.2"/>
</dbReference>
<dbReference type="SMR" id="C9DQ22"/>
<dbReference type="GO" id="GO:0050116">
    <property type="term" value="F:N,N-dimethylformamidase activity"/>
    <property type="evidence" value="ECO:0007669"/>
    <property type="project" value="UniProtKB-EC"/>
</dbReference>
<gene>
    <name evidence="5" type="primary">dmfA1</name>
</gene>
<protein>
    <recommendedName>
        <fullName evidence="2">N,N-dimethylformamidase alpha subunit</fullName>
        <ecNumber>3.5.1.56</ecNumber>
    </recommendedName>
    <alternativeName>
        <fullName evidence="2">N,N-dimethylformamidase light chain</fullName>
    </alternativeName>
</protein>
<organism>
    <name type="scientific">Paracoccus aminophilus</name>
    <dbReference type="NCBI Taxonomy" id="34003"/>
    <lineage>
        <taxon>Bacteria</taxon>
        <taxon>Pseudomonadati</taxon>
        <taxon>Pseudomonadota</taxon>
        <taxon>Alphaproteobacteria</taxon>
        <taxon>Rhodobacterales</taxon>
        <taxon>Paracoccaceae</taxon>
        <taxon>Paracoccus</taxon>
    </lineage>
</organism>
<geneLocation type="plasmid" evidence="5">
    <name>pAMI2</name>
</geneLocation>
<accession>C9DQ22</accession>
<sequence>MNQRRENYVSDPSAYPDRSADWYEYFDRKRREEIIEIIDSHPEIIDEHERNPFGYRNHPSPHLQRVHNYFRMQPTFGKYYIYTEREWSSYRIAEIREFGKLPVLTDDSFATEEEAMHAVFLKRIEDVRNELSQAEQREIAN</sequence>
<evidence type="ECO:0000250" key="1"/>
<evidence type="ECO:0000250" key="2">
    <source>
        <dbReference type="UniProtKB" id="Q9LCC1"/>
    </source>
</evidence>
<evidence type="ECO:0000269" key="3">
    <source>
    </source>
</evidence>
<evidence type="ECO:0000305" key="4"/>
<evidence type="ECO:0000312" key="5">
    <source>
        <dbReference type="EMBL" id="ACV81785.1"/>
    </source>
</evidence>
<proteinExistence type="evidence at transcript level"/>
<reference evidence="5" key="1">
    <citation type="journal article" date="2007" name="J. Bacteriol.">
        <title>The SXT conjugative element and linear prophage N15 encode toxin-antitoxin-stabilizing systems homologous to the tad-ata module of the Paracoccus aminophilus plasmid pAMI2.</title>
        <authorList>
            <person name="Dziewit L."/>
            <person name="Jazurek M."/>
            <person name="Drewniak L."/>
            <person name="Baj J."/>
            <person name="Bartosik D."/>
        </authorList>
    </citation>
    <scope>NUCLEOTIDE SEQUENCE [GENOMIC DNA]</scope>
    <source>
        <strain>ATCC 49673 / DSM 8538 / JCM 7686 / NBRC 16710</strain>
    </source>
</reference>
<reference evidence="4 5" key="2">
    <citation type="journal article" date="2010" name="Appl. Environ. Microbiol.">
        <title>Plasmid pAMI2 of Paracoccus aminophilus JCM 7686 carries N,N-dimethylformamide degradation-related genes whose expression is activated by a LuxR family regulator.</title>
        <authorList>
            <person name="Dziewit L."/>
            <person name="Dmowski M."/>
            <person name="Baj J."/>
            <person name="Bartosik D."/>
        </authorList>
    </citation>
    <scope>NUCLEOTIDE SEQUENCE [GENOMIC DNA]</scope>
    <scope>INDUCTION</scope>
    <source>
        <strain>ATCC 49673 / DSM 8538 / JCM 7686 / NBRC 16710</strain>
    </source>
</reference>
<name>DMFAA_PARAH</name>